<accession>P22754</accession>
<protein>
    <recommendedName>
        <fullName>Uncharacterized 9.4 kDa protein in flaL 3'region</fullName>
    </recommendedName>
    <alternativeName>
        <fullName>ORF3</fullName>
    </alternativeName>
</protein>
<proteinExistence type="predicted"/>
<reference key="1">
    <citation type="journal article" date="1990" name="J. Gen. Microbiol.">
        <title>Nucleotide sequences of the Bacillus subtilis flaD locus and a B. licheniformis homologue affecting the autolysin level and flagellation.</title>
        <authorList>
            <person name="Sekiguchi J."/>
            <person name="Ohsu H."/>
            <person name="Kuroda A."/>
            <person name="Moriyama H."/>
            <person name="Akamatsu T."/>
        </authorList>
    </citation>
    <scope>NUCLEOTIDE SEQUENCE [GENOMIC DNA]</scope>
    <source>
        <strain>FD0120</strain>
    </source>
</reference>
<name>YFL2_BACLI</name>
<organism>
    <name type="scientific">Bacillus licheniformis</name>
    <dbReference type="NCBI Taxonomy" id="1402"/>
    <lineage>
        <taxon>Bacteria</taxon>
        <taxon>Bacillati</taxon>
        <taxon>Bacillota</taxon>
        <taxon>Bacilli</taxon>
        <taxon>Bacillales</taxon>
        <taxon>Bacillaceae</taxon>
        <taxon>Bacillus</taxon>
    </lineage>
</organism>
<sequence>MNIKKRIIQIRFLNCTIIYLHCALFRSLLHNLFHRHVFCRRLSSRSIEYLRMRSQAAQNLLDICSVPFCRWRLLFCH</sequence>
<dbReference type="EMBL" id="M60287">
    <property type="protein sequence ID" value="AAA22440.1"/>
    <property type="molecule type" value="Genomic_DNA"/>
</dbReference>
<dbReference type="PIR" id="C45824">
    <property type="entry name" value="C45824"/>
</dbReference>
<feature type="chain" id="PRO_0000066212" description="Uncharacterized 9.4 kDa protein in flaL 3'region">
    <location>
        <begin position="1"/>
        <end position="77"/>
    </location>
</feature>